<evidence type="ECO:0000250" key="1"/>
<evidence type="ECO:0000255" key="2"/>
<evidence type="ECO:0000255" key="3">
    <source>
        <dbReference type="PROSITE-ProRule" id="PRU00068"/>
    </source>
</evidence>
<evidence type="ECO:0000255" key="4">
    <source>
        <dbReference type="PROSITE-ProRule" id="PRU00276"/>
    </source>
</evidence>
<evidence type="ECO:0000255" key="5">
    <source>
        <dbReference type="PROSITE-ProRule" id="PRU10095"/>
    </source>
</evidence>
<evidence type="ECO:0000269" key="6">
    <source>
    </source>
</evidence>
<evidence type="ECO:0000305" key="7"/>
<proteinExistence type="evidence at transcript level"/>
<organism>
    <name type="scientific">Crotalus durissus durissus</name>
    <name type="common">Central American rattlesnake</name>
    <dbReference type="NCBI Taxonomy" id="31150"/>
    <lineage>
        <taxon>Eukaryota</taxon>
        <taxon>Metazoa</taxon>
        <taxon>Chordata</taxon>
        <taxon>Craniata</taxon>
        <taxon>Vertebrata</taxon>
        <taxon>Euteleostomi</taxon>
        <taxon>Lepidosauria</taxon>
        <taxon>Squamata</taxon>
        <taxon>Bifurcata</taxon>
        <taxon>Unidentata</taxon>
        <taxon>Episquamata</taxon>
        <taxon>Toxicofera</taxon>
        <taxon>Serpentes</taxon>
        <taxon>Colubroidea</taxon>
        <taxon>Viperidae</taxon>
        <taxon>Crotalinae</taxon>
        <taxon>Crotalus</taxon>
    </lineage>
</organism>
<accession>Q2QA02</accession>
<name>VM3_CRODD</name>
<keyword id="KW-0106">Calcium</keyword>
<keyword id="KW-1015">Disulfide bond</keyword>
<keyword id="KW-0325">Glycoprotein</keyword>
<keyword id="KW-1200">Hemorrhagic toxin</keyword>
<keyword id="KW-1199">Hemostasis impairing toxin</keyword>
<keyword id="KW-0378">Hydrolase</keyword>
<keyword id="KW-0479">Metal-binding</keyword>
<keyword id="KW-0482">Metalloprotease</keyword>
<keyword id="KW-0645">Protease</keyword>
<keyword id="KW-0964">Secreted</keyword>
<keyword id="KW-0732">Signal</keyword>
<keyword id="KW-0800">Toxin</keyword>
<keyword id="KW-0862">Zinc</keyword>
<keyword id="KW-0865">Zymogen</keyword>
<dbReference type="EC" id="3.4.24.-"/>
<dbReference type="EMBL" id="DQ164403">
    <property type="protein sequence ID" value="ABA42117.1"/>
    <property type="molecule type" value="mRNA"/>
</dbReference>
<dbReference type="SMR" id="Q2QA02"/>
<dbReference type="MEROPS" id="M12.332"/>
<dbReference type="GO" id="GO:0005576">
    <property type="term" value="C:extracellular region"/>
    <property type="evidence" value="ECO:0007669"/>
    <property type="project" value="UniProtKB-SubCell"/>
</dbReference>
<dbReference type="GO" id="GO:0005886">
    <property type="term" value="C:plasma membrane"/>
    <property type="evidence" value="ECO:0007669"/>
    <property type="project" value="TreeGrafter"/>
</dbReference>
<dbReference type="GO" id="GO:0046872">
    <property type="term" value="F:metal ion binding"/>
    <property type="evidence" value="ECO:0007669"/>
    <property type="project" value="UniProtKB-KW"/>
</dbReference>
<dbReference type="GO" id="GO:0004222">
    <property type="term" value="F:metalloendopeptidase activity"/>
    <property type="evidence" value="ECO:0007669"/>
    <property type="project" value="InterPro"/>
</dbReference>
<dbReference type="GO" id="GO:0090729">
    <property type="term" value="F:toxin activity"/>
    <property type="evidence" value="ECO:0007669"/>
    <property type="project" value="UniProtKB-KW"/>
</dbReference>
<dbReference type="GO" id="GO:0006508">
    <property type="term" value="P:proteolysis"/>
    <property type="evidence" value="ECO:0007669"/>
    <property type="project" value="UniProtKB-KW"/>
</dbReference>
<dbReference type="CDD" id="cd04269">
    <property type="entry name" value="ZnMc_adamalysin_II_like"/>
    <property type="match status" value="1"/>
</dbReference>
<dbReference type="FunFam" id="3.40.390.10:FF:000002">
    <property type="entry name" value="Disintegrin and metalloproteinase domain-containing protein 22"/>
    <property type="match status" value="1"/>
</dbReference>
<dbReference type="FunFam" id="4.10.70.10:FF:000001">
    <property type="entry name" value="Disintegrin and metalloproteinase domain-containing protein 22"/>
    <property type="match status" value="1"/>
</dbReference>
<dbReference type="Gene3D" id="3.40.390.10">
    <property type="entry name" value="Collagenase (Catalytic Domain)"/>
    <property type="match status" value="1"/>
</dbReference>
<dbReference type="Gene3D" id="4.10.70.10">
    <property type="entry name" value="Disintegrin domain"/>
    <property type="match status" value="1"/>
</dbReference>
<dbReference type="InterPro" id="IPR006586">
    <property type="entry name" value="ADAM_Cys-rich"/>
</dbReference>
<dbReference type="InterPro" id="IPR018358">
    <property type="entry name" value="Disintegrin_CS"/>
</dbReference>
<dbReference type="InterPro" id="IPR001762">
    <property type="entry name" value="Disintegrin_dom"/>
</dbReference>
<dbReference type="InterPro" id="IPR036436">
    <property type="entry name" value="Disintegrin_dom_sf"/>
</dbReference>
<dbReference type="InterPro" id="IPR024079">
    <property type="entry name" value="MetalloPept_cat_dom_sf"/>
</dbReference>
<dbReference type="InterPro" id="IPR001590">
    <property type="entry name" value="Peptidase_M12B"/>
</dbReference>
<dbReference type="InterPro" id="IPR002870">
    <property type="entry name" value="Peptidase_M12B_N"/>
</dbReference>
<dbReference type="InterPro" id="IPR034027">
    <property type="entry name" value="Reprolysin_adamalysin"/>
</dbReference>
<dbReference type="PANTHER" id="PTHR11905">
    <property type="entry name" value="ADAM A DISINTEGRIN AND METALLOPROTEASE DOMAIN"/>
    <property type="match status" value="1"/>
</dbReference>
<dbReference type="PANTHER" id="PTHR11905:SF32">
    <property type="entry name" value="DISINTEGRIN AND METALLOPROTEINASE DOMAIN-CONTAINING PROTEIN 28"/>
    <property type="match status" value="1"/>
</dbReference>
<dbReference type="Pfam" id="PF08516">
    <property type="entry name" value="ADAM_CR"/>
    <property type="match status" value="1"/>
</dbReference>
<dbReference type="Pfam" id="PF00200">
    <property type="entry name" value="Disintegrin"/>
    <property type="match status" value="1"/>
</dbReference>
<dbReference type="Pfam" id="PF01562">
    <property type="entry name" value="Pep_M12B_propep"/>
    <property type="match status" value="1"/>
</dbReference>
<dbReference type="Pfam" id="PF01421">
    <property type="entry name" value="Reprolysin"/>
    <property type="match status" value="1"/>
</dbReference>
<dbReference type="PRINTS" id="PR00289">
    <property type="entry name" value="DISINTEGRIN"/>
</dbReference>
<dbReference type="SMART" id="SM00608">
    <property type="entry name" value="ACR"/>
    <property type="match status" value="1"/>
</dbReference>
<dbReference type="SMART" id="SM00050">
    <property type="entry name" value="DISIN"/>
    <property type="match status" value="1"/>
</dbReference>
<dbReference type="SUPFAM" id="SSF57552">
    <property type="entry name" value="Blood coagulation inhibitor (disintegrin)"/>
    <property type="match status" value="1"/>
</dbReference>
<dbReference type="SUPFAM" id="SSF55486">
    <property type="entry name" value="Metalloproteases ('zincins'), catalytic domain"/>
    <property type="match status" value="1"/>
</dbReference>
<dbReference type="PROSITE" id="PS50215">
    <property type="entry name" value="ADAM_MEPRO"/>
    <property type="match status" value="1"/>
</dbReference>
<dbReference type="PROSITE" id="PS00427">
    <property type="entry name" value="DISINTEGRIN_1"/>
    <property type="match status" value="1"/>
</dbReference>
<dbReference type="PROSITE" id="PS50214">
    <property type="entry name" value="DISINTEGRIN_2"/>
    <property type="match status" value="1"/>
</dbReference>
<dbReference type="PROSITE" id="PS00142">
    <property type="entry name" value="ZINC_PROTEASE"/>
    <property type="match status" value="1"/>
</dbReference>
<sequence length="609" mass="68291">MIQVLLVTICLAALPYQGSSIILESGNVNDYEIVYPRKVTALPKGAVQPKYEDAMQYELKVNGEPVVLYLEKNKQLFSKDYSETHYSPDGREITTYPLVEDHCYYHGRIENDADSTASISACNGLKGHFKLQGEMYLIEPLKLSNSEAHAVYKYENVEKEDEAPKMCGVTQNWKSYEPIKKASQLVVTAEHQKYNPFRFVELVLVVDKAMVTKNNDDLDKIKTRMYELANTVNEIYRYMYIHVALVGLEIWSNEDKITVKPEAGYTLNAFGEWRKTDLLTRKKHDNAQLLTAIDLDRVIGLAYVGSMCHPKRSTGIIQDYSPINLVVAVIMAHEMGHNLGIHHDSGYCSCGDYACIMRPEISPEPSTFFSNCSYFDCWDFIMNQNPECIVNEPLGTDIISPPVCGNELLEVGEECDCGTPENCQNECCDAATCKLKSGSQCGHGDCCEQCKFSKSGTECRASMSECDPAEHCTGQSSECPADVFHKNGQPCLDNYGYCYNGNCPIMYHQCYDLFGADVYEAEDSCFERNQKGNYYGYCRKENGNKIPCAPEDVKCGRLYCKDNSPGQNNPCKMFYSNEDEHKGMVLPGTKCADGKVCSNGHCVDVATAY</sequence>
<reference key="1">
    <citation type="journal article" date="2008" name="Toxicon">
        <title>Immunization with cDNA of a novel P-III type metalloproteinase from the rattlesnake Crotalus durissus durissus elicits antibodies which neutralize 69% of the hemorrhage induced by the whole venom.</title>
        <authorList>
            <person name="Azofeifa-Cordero G."/>
            <person name="Arce-Estrada V."/>
            <person name="Flores-Diaz M."/>
            <person name="Alape-Giron A."/>
        </authorList>
    </citation>
    <scope>NUCLEOTIDE SEQUENCE [MRNA]</scope>
    <scope>FUNCTION</scope>
    <source>
        <tissue>Venom gland</tissue>
    </source>
</reference>
<feature type="signal peptide" evidence="2">
    <location>
        <begin position="1"/>
        <end position="20"/>
    </location>
</feature>
<feature type="propeptide" id="PRO_0000359439" evidence="1">
    <location>
        <begin position="21"/>
        <end position="189"/>
    </location>
</feature>
<feature type="chain" id="PRO_0000359440" description="Zinc metalloproteinase-disintegrin-like">
    <location>
        <begin position="190"/>
        <end position="609"/>
    </location>
</feature>
<feature type="domain" description="Peptidase M12B" evidence="4">
    <location>
        <begin position="198"/>
        <end position="393"/>
    </location>
</feature>
<feature type="domain" description="Disintegrin" evidence="3">
    <location>
        <begin position="401"/>
        <end position="487"/>
    </location>
</feature>
<feature type="short sequence motif" description="D/ECD-tripeptide">
    <location>
        <begin position="465"/>
        <end position="467"/>
    </location>
</feature>
<feature type="active site" evidence="4 5">
    <location>
        <position position="334"/>
    </location>
</feature>
<feature type="binding site" evidence="1">
    <location>
        <position position="201"/>
    </location>
    <ligand>
        <name>Ca(2+)</name>
        <dbReference type="ChEBI" id="CHEBI:29108"/>
        <label>1</label>
    </ligand>
</feature>
<feature type="binding site" evidence="1">
    <location>
        <position position="285"/>
    </location>
    <ligand>
        <name>Ca(2+)</name>
        <dbReference type="ChEBI" id="CHEBI:29108"/>
        <label>1</label>
    </ligand>
</feature>
<feature type="binding site" evidence="1">
    <location>
        <position position="333"/>
    </location>
    <ligand>
        <name>Zn(2+)</name>
        <dbReference type="ChEBI" id="CHEBI:29105"/>
        <note>catalytic</note>
    </ligand>
</feature>
<feature type="binding site" evidence="1">
    <location>
        <position position="337"/>
    </location>
    <ligand>
        <name>Zn(2+)</name>
        <dbReference type="ChEBI" id="CHEBI:29105"/>
        <note>catalytic</note>
    </ligand>
</feature>
<feature type="binding site" evidence="1">
    <location>
        <position position="343"/>
    </location>
    <ligand>
        <name>Zn(2+)</name>
        <dbReference type="ChEBI" id="CHEBI:29105"/>
        <note>catalytic</note>
    </ligand>
</feature>
<feature type="binding site" evidence="1">
    <location>
        <position position="388"/>
    </location>
    <ligand>
        <name>Ca(2+)</name>
        <dbReference type="ChEBI" id="CHEBI:29108"/>
        <label>1</label>
    </ligand>
</feature>
<feature type="binding site" evidence="1">
    <location>
        <position position="391"/>
    </location>
    <ligand>
        <name>Ca(2+)</name>
        <dbReference type="ChEBI" id="CHEBI:29108"/>
        <label>1</label>
    </ligand>
</feature>
<feature type="binding site" evidence="1">
    <location>
        <position position="403"/>
    </location>
    <ligand>
        <name>Ca(2+)</name>
        <dbReference type="ChEBI" id="CHEBI:29108"/>
        <label>2</label>
    </ligand>
</feature>
<feature type="binding site" evidence="1">
    <location>
        <position position="406"/>
    </location>
    <ligand>
        <name>Ca(2+)</name>
        <dbReference type="ChEBI" id="CHEBI:29108"/>
        <label>2</label>
    </ligand>
</feature>
<feature type="binding site" evidence="1">
    <location>
        <position position="408"/>
    </location>
    <ligand>
        <name>Ca(2+)</name>
        <dbReference type="ChEBI" id="CHEBI:29108"/>
        <label>2</label>
    </ligand>
</feature>
<feature type="binding site" evidence="1">
    <location>
        <position position="410"/>
    </location>
    <ligand>
        <name>Ca(2+)</name>
        <dbReference type="ChEBI" id="CHEBI:29108"/>
        <label>2</label>
    </ligand>
</feature>
<feature type="binding site" evidence="1">
    <location>
        <position position="413"/>
    </location>
    <ligand>
        <name>Ca(2+)</name>
        <dbReference type="ChEBI" id="CHEBI:29108"/>
        <label>2</label>
    </ligand>
</feature>
<feature type="binding site" evidence="1">
    <location>
        <position position="416"/>
    </location>
    <ligand>
        <name>Ca(2+)</name>
        <dbReference type="ChEBI" id="CHEBI:29108"/>
        <label>2</label>
    </ligand>
</feature>
<feature type="binding site" evidence="1">
    <location>
        <position position="467"/>
    </location>
    <ligand>
        <name>Ca(2+)</name>
        <dbReference type="ChEBI" id="CHEBI:29108"/>
        <label>3</label>
    </ligand>
</feature>
<feature type="binding site" evidence="1">
    <location>
        <position position="468"/>
    </location>
    <ligand>
        <name>Ca(2+)</name>
        <dbReference type="ChEBI" id="CHEBI:29108"/>
        <label>3</label>
    </ligand>
</feature>
<feature type="binding site" evidence="1">
    <location>
        <position position="470"/>
    </location>
    <ligand>
        <name>Ca(2+)</name>
        <dbReference type="ChEBI" id="CHEBI:29108"/>
        <label>3</label>
    </ligand>
</feature>
<feature type="binding site" evidence="1">
    <location>
        <position position="482"/>
    </location>
    <ligand>
        <name>Ca(2+)</name>
        <dbReference type="ChEBI" id="CHEBI:29108"/>
        <label>3</label>
    </ligand>
</feature>
<feature type="binding site" evidence="1">
    <location>
        <position position="483"/>
    </location>
    <ligand>
        <name>Ca(2+)</name>
        <dbReference type="ChEBI" id="CHEBI:29108"/>
        <label>3</label>
    </ligand>
</feature>
<feature type="glycosylation site" description="N-linked (GlcNAc...) asparagine" evidence="2">
    <location>
        <position position="371"/>
    </location>
</feature>
<feature type="disulfide bond" evidence="1">
    <location>
        <begin position="308"/>
        <end position="388"/>
    </location>
</feature>
<feature type="disulfide bond" evidence="1">
    <location>
        <begin position="348"/>
        <end position="372"/>
    </location>
</feature>
<feature type="disulfide bond" evidence="1">
    <location>
        <begin position="350"/>
        <end position="355"/>
    </location>
</feature>
<feature type="disulfide bond" evidence="1">
    <location>
        <begin position="404"/>
        <end position="433"/>
    </location>
</feature>
<feature type="disulfide bond" evidence="1">
    <location>
        <begin position="415"/>
        <end position="428"/>
    </location>
</feature>
<feature type="disulfide bond" evidence="1">
    <location>
        <begin position="417"/>
        <end position="423"/>
    </location>
</feature>
<feature type="disulfide bond" evidence="1">
    <location>
        <begin position="427"/>
        <end position="450"/>
    </location>
</feature>
<feature type="disulfide bond" evidence="1">
    <location>
        <begin position="441"/>
        <end position="447"/>
    </location>
</feature>
<feature type="disulfide bond" evidence="1">
    <location>
        <begin position="446"/>
        <end position="472"/>
    </location>
</feature>
<feature type="disulfide bond" evidence="1">
    <location>
        <begin position="459"/>
        <end position="479"/>
    </location>
</feature>
<feature type="disulfide bond" evidence="1">
    <location>
        <begin position="466"/>
        <end position="498"/>
    </location>
</feature>
<feature type="disulfide bond" evidence="1">
    <location>
        <begin position="491"/>
        <end position="503"/>
    </location>
</feature>
<feature type="disulfide bond" evidence="1">
    <location>
        <begin position="510"/>
        <end position="560"/>
    </location>
</feature>
<feature type="disulfide bond" evidence="1">
    <location>
        <begin position="525"/>
        <end position="571"/>
    </location>
</feature>
<feature type="disulfide bond" evidence="1">
    <location>
        <begin position="538"/>
        <end position="548"/>
    </location>
</feature>
<feature type="disulfide bond" evidence="1">
    <location>
        <begin position="555"/>
        <end position="597"/>
    </location>
</feature>
<feature type="disulfide bond" evidence="1">
    <location>
        <begin position="591"/>
        <end position="602"/>
    </location>
</feature>
<protein>
    <recommendedName>
        <fullName>Zinc metalloproteinase-disintegrin-like</fullName>
        <ecNumber>3.4.24.-</ecNumber>
    </recommendedName>
    <alternativeName>
        <fullName>Snake venom metalloproteinase</fullName>
        <shortName>SVMP</shortName>
    </alternativeName>
</protein>
<comment type="function">
    <text evidence="6">This protein is a zinc metalloprotease from snake venom that possesses hemorrhagic activity.</text>
</comment>
<comment type="cofactor">
    <cofactor evidence="1">
        <name>Zn(2+)</name>
        <dbReference type="ChEBI" id="CHEBI:29105"/>
    </cofactor>
    <text evidence="1">Binds 1 zinc ion per subunit.</text>
</comment>
<comment type="subunit">
    <text evidence="1">Monomer.</text>
</comment>
<comment type="subcellular location">
    <subcellularLocation>
        <location evidence="1">Secreted</location>
    </subcellularLocation>
</comment>
<comment type="tissue specificity">
    <text>Expressed by the venom gland.</text>
</comment>
<comment type="similarity">
    <text evidence="7">Belongs to the venom metalloproteinase (M12B) family. P-III subfamily. P-IIIa sub-subfamily.</text>
</comment>